<reference evidence="7" key="1">
    <citation type="submission" date="2005-02" db="EMBL/GenBank/DDBJ databases">
        <title>The vitellogenin genes of the red imported fire ant, Solenopsis invicta: cDNA cloning, protein expression and promoter analysis.</title>
        <authorList>
            <person name="Tian H."/>
            <person name="Vinson S.B."/>
            <person name="Coates C.J."/>
        </authorList>
    </citation>
    <scope>NUCLEOTIDE SEQUENCE [MRNA]</scope>
</reference>
<dbReference type="EMBL" id="AY941795">
    <property type="protein sequence ID" value="AAY22960.1"/>
    <property type="molecule type" value="mRNA"/>
</dbReference>
<dbReference type="RefSeq" id="NP_001291513.1">
    <property type="nucleotide sequence ID" value="NM_001304584.1"/>
</dbReference>
<dbReference type="EnsemblMetazoa" id="NM_001304584.1">
    <property type="protein sequence ID" value="NP_001291513.1"/>
    <property type="gene ID" value="LOC105205782"/>
</dbReference>
<dbReference type="GeneID" id="105205782"/>
<dbReference type="KEGG" id="soc:105205782"/>
<dbReference type="OrthoDB" id="10261433at2759"/>
<dbReference type="GO" id="GO:0005576">
    <property type="term" value="C:extracellular region"/>
    <property type="evidence" value="ECO:0000250"/>
    <property type="project" value="UniProtKB"/>
</dbReference>
<dbReference type="GO" id="GO:0005319">
    <property type="term" value="F:lipid transporter activity"/>
    <property type="evidence" value="ECO:0007669"/>
    <property type="project" value="InterPro"/>
</dbReference>
<dbReference type="GO" id="GO:0045735">
    <property type="term" value="F:nutrient reservoir activity"/>
    <property type="evidence" value="ECO:0007669"/>
    <property type="project" value="UniProtKB-KW"/>
</dbReference>
<dbReference type="FunFam" id="1.25.10.20:FF:000003">
    <property type="entry name" value="Vitellogenin C"/>
    <property type="match status" value="1"/>
</dbReference>
<dbReference type="FunFam" id="2.30.230.10:FF:000008">
    <property type="entry name" value="Vitellogenin-like Protein"/>
    <property type="match status" value="1"/>
</dbReference>
<dbReference type="Gene3D" id="2.30.230.10">
    <property type="entry name" value="Lipovitellin, beta-sheet shell regions, chain A"/>
    <property type="match status" value="1"/>
</dbReference>
<dbReference type="Gene3D" id="1.25.10.20">
    <property type="entry name" value="Vitellinogen, superhelical"/>
    <property type="match status" value="1"/>
</dbReference>
<dbReference type="InterPro" id="IPR015819">
    <property type="entry name" value="Lipid_transp_b-sht_shell"/>
</dbReference>
<dbReference type="InterPro" id="IPR011030">
    <property type="entry name" value="Lipovitellin_superhlx_dom"/>
</dbReference>
<dbReference type="InterPro" id="IPR015816">
    <property type="entry name" value="Vitellinogen_b-sht_N"/>
</dbReference>
<dbReference type="InterPro" id="IPR015255">
    <property type="entry name" value="Vitellinogen_open_b-sht"/>
</dbReference>
<dbReference type="InterPro" id="IPR050733">
    <property type="entry name" value="Vitellogenin/Apolipophorin"/>
</dbReference>
<dbReference type="InterPro" id="IPR001747">
    <property type="entry name" value="Vitellogenin_N"/>
</dbReference>
<dbReference type="InterPro" id="IPR001846">
    <property type="entry name" value="VWF_type-D"/>
</dbReference>
<dbReference type="PANTHER" id="PTHR23345:SF15">
    <property type="entry name" value="VITELLOGENIN 1-RELATED"/>
    <property type="match status" value="1"/>
</dbReference>
<dbReference type="PANTHER" id="PTHR23345">
    <property type="entry name" value="VITELLOGENIN-RELATED"/>
    <property type="match status" value="1"/>
</dbReference>
<dbReference type="Pfam" id="PF01347">
    <property type="entry name" value="Vitellogenin_N"/>
    <property type="match status" value="1"/>
</dbReference>
<dbReference type="Pfam" id="PF00094">
    <property type="entry name" value="VWD"/>
    <property type="match status" value="1"/>
</dbReference>
<dbReference type="SMART" id="SM01169">
    <property type="entry name" value="DUF1943"/>
    <property type="match status" value="1"/>
</dbReference>
<dbReference type="SMART" id="SM00638">
    <property type="entry name" value="LPD_N"/>
    <property type="match status" value="1"/>
</dbReference>
<dbReference type="SMART" id="SM00216">
    <property type="entry name" value="VWD"/>
    <property type="match status" value="1"/>
</dbReference>
<dbReference type="SUPFAM" id="SSF56968">
    <property type="entry name" value="Lipovitellin-phosvitin complex, beta-sheet shell regions"/>
    <property type="match status" value="2"/>
</dbReference>
<dbReference type="SUPFAM" id="SSF48431">
    <property type="entry name" value="Lipovitellin-phosvitin complex, superhelical domain"/>
    <property type="match status" value="1"/>
</dbReference>
<dbReference type="PROSITE" id="PS51211">
    <property type="entry name" value="VITELLOGENIN"/>
    <property type="match status" value="1"/>
</dbReference>
<dbReference type="PROSITE" id="PS51233">
    <property type="entry name" value="VWFD"/>
    <property type="match status" value="1"/>
</dbReference>
<comment type="function">
    <text evidence="6">Precursor of the egg-yolk proteins that are sources of nutrients during embryonic development.</text>
</comment>
<comment type="subcellular location">
    <subcellularLocation>
        <location evidence="1">Secreted</location>
    </subcellularLocation>
</comment>
<accession>Q2VQM6</accession>
<sequence>MWFPVTLLFLAGVAVATNNHEHAWETGNEYQYSVFGRTLAGVDKLKRQYTGIQYNGILTIQVKSPELLQAKFDNQHYAHIHQELSNGPDDFDDPKNVNYKRMPMSEKPFEIKLKHGIIRDLLFDRDVPTWEVNMMKAIVGQLQVDTQGENAINSKSIQVPSDESFAATFKAMEDSVSGKCEVLYEITPLTVNEIQAKQDRIPMPSLHSDGNHYEVKKLKNYERCQERQLYHYGFDIKSAGKKWAGQDKVISQLSVTEMVISGDLKRFTIQSTEMKNEIAVQPETSDSPIGNVYTITRLTLKKKNSISNSWFGPHEISNLESTGNLVYTFNNPFSDSDNRRVRHHSVSQNSEQENSSESSKSSSQSSSSSSSASSSSSSSSSSSSSSSSSSSSSSSSSSEEENENVVQTKAALQNIFLAPNIPLLPYFIGYKGKTILKSDKQNVMQFAKNLISEIAEEVQITSEGYEATMEKYTILKKLLRTMNRKQYAELEQYVLQFNKGSDSRANAWTTFRDAVLHAGTGPAYVTIENWIKSGQVKGAEAARLLSQLPKNVYLPTPNYVQAFFELIKSPMVTQQEYVNVSAPIALAELLRNSYIGQNYYPIYSFGFITLKKNDEVVGKYINYLANQLQQGYQENNSRKIQTYIFALGVTAHPKIISVFEPYLEHSLPASTYQRTLMVAALSDLAKVQPKLVGPIFYKLYLNENEAHEVRAMAVHEFILTDPPMITLQRIAKNTNYDTSKQVNAVVKSTLESLVHTKRSEWRHLANKARNVRYLVTSNNYGNWHSSGYHLDFQDWLVNGLSLQTIAGDDLIPKYVYVGVNSVFDFLDQPSVEAGYGLSSHRQFFNEISKQWYSHQADDERRRSRVEKLAQALQIKAKEQNNLEGHFLFNSVYDSAFYPYDRHRIREAVAALKQFLNGNNKLEGSAFNNYENIMSFANEDGLPFVYTLDAPTFTKAKVNFKQGGRTANSGTFQALIANNVQQQFGFVALFEHQKYIAGINNNRVLRVPVEYDVEFNSNNAKNFALKIRPQNLPRMGNELKLLHYSVVPFTTQQDLLDLKPTSNDKNTRPVFTSPVYKTTVQKDTFSIKVESDSIGKESDTESFVADVLRLTNANDDHYTKISTILTSDQIQKSEGHITMTYDTVTIGGNNDNSGQSSEEMESLHSISWKSNSKERRKQIANNLSKGIKSGEVYIFDVSYSVPMLHENEYVFTFGGMKSNSNQKLRGYFYWNSHAPQEVNYEVCFSHEMQYAPRATPLNFKYALKNSPRDEYKAVLKYGKTCATGNKVVITGSSSQSQQLRDIIENSSLPNNVWKRFQTGNKAVENCMKANDIAQMRDQIDVQFDLSNIVPESVRRYAKKIIEYLEKYVYKVCDNVSREEESEENTIKNTLLFASPVNRMWPNWLPQSVSDITSGWSPSFNSFGPSSESQWQTMRLNVADYPDEFESEKQSCTLDKDKVYTFDNQLYNVHLGKCKHVLLTTYPQDFHNRRNYIPENSKVAILAEDADNDSRNVYIWLGKQEIKLKKAGNNVQAVVNGQNVEISDKGYQKINGNEITFEILSLPDDSLSVVSEKYGINAVYDGKRVVISASDAYRNAVRGLCGNFDSRPNTDFVTPKNCLLTKPEEFAATYAMTQENCQGPAPENKRRAEQSTCHEFPENEQMNVISDREAGRMMTEGVNWGYHQANRNKEHGRGNKSHQNNKKQYQANSQESGSSESRNDKKKHNIVYRTRVVEEGDEICFTTTPLPACRQGARPTERYPKKADLYCMPRNDQSLDLKRRVEDGANPDFTRKSVSRMQVFQVPVSCSAA</sequence>
<keyword id="KW-1015">Disulfide bond</keyword>
<keyword id="KW-0325">Glycoprotein</keyword>
<keyword id="KW-0964">Secreted</keyword>
<keyword id="KW-0732">Signal</keyword>
<keyword id="KW-0758">Storage protein</keyword>
<name>VIT2_SOLIN</name>
<protein>
    <recommendedName>
        <fullName evidence="7">Vitellogenin-2</fullName>
    </recommendedName>
</protein>
<proteinExistence type="evidence at transcript level"/>
<evidence type="ECO:0000250" key="1">
    <source>
        <dbReference type="UniProtKB" id="Q7Z1M0"/>
    </source>
</evidence>
<evidence type="ECO:0000255" key="2"/>
<evidence type="ECO:0000255" key="3">
    <source>
        <dbReference type="PROSITE-ProRule" id="PRU00557"/>
    </source>
</evidence>
<evidence type="ECO:0000255" key="4">
    <source>
        <dbReference type="PROSITE-ProRule" id="PRU00580"/>
    </source>
</evidence>
<evidence type="ECO:0000256" key="5">
    <source>
        <dbReference type="SAM" id="MobiDB-lite"/>
    </source>
</evidence>
<evidence type="ECO:0000305" key="6"/>
<evidence type="ECO:0000312" key="7">
    <source>
        <dbReference type="EMBL" id="AAY22960.1"/>
    </source>
</evidence>
<organism>
    <name type="scientific">Solenopsis invicta</name>
    <name type="common">Red imported fire ant</name>
    <name type="synonym">Solenopsis wagneri</name>
    <dbReference type="NCBI Taxonomy" id="13686"/>
    <lineage>
        <taxon>Eukaryota</taxon>
        <taxon>Metazoa</taxon>
        <taxon>Ecdysozoa</taxon>
        <taxon>Arthropoda</taxon>
        <taxon>Hexapoda</taxon>
        <taxon>Insecta</taxon>
        <taxon>Pterygota</taxon>
        <taxon>Neoptera</taxon>
        <taxon>Endopterygota</taxon>
        <taxon>Hymenoptera</taxon>
        <taxon>Apocrita</taxon>
        <taxon>Aculeata</taxon>
        <taxon>Formicoidea</taxon>
        <taxon>Formicidae</taxon>
        <taxon>Myrmicinae</taxon>
        <taxon>Solenopsis</taxon>
    </lineage>
</organism>
<feature type="signal peptide" evidence="2">
    <location>
        <begin position="1"/>
        <end position="16"/>
    </location>
</feature>
<feature type="chain" id="PRO_0000378060" description="Vitellogenin-2" evidence="2">
    <location>
        <begin position="17"/>
        <end position="1807"/>
    </location>
</feature>
<feature type="domain" description="Vitellogenin" evidence="3">
    <location>
        <begin position="24"/>
        <end position="819"/>
    </location>
</feature>
<feature type="domain" description="VWFD" evidence="4">
    <location>
        <begin position="1448"/>
        <end position="1636"/>
    </location>
</feature>
<feature type="region of interest" description="Disordered" evidence="5">
    <location>
        <begin position="334"/>
        <end position="402"/>
    </location>
</feature>
<feature type="region of interest" description="Disordered" evidence="5">
    <location>
        <begin position="1635"/>
        <end position="1655"/>
    </location>
</feature>
<feature type="region of interest" description="Disordered" evidence="5">
    <location>
        <begin position="1684"/>
        <end position="1723"/>
    </location>
</feature>
<feature type="compositionally biased region" description="Low complexity" evidence="5">
    <location>
        <begin position="346"/>
        <end position="397"/>
    </location>
</feature>
<feature type="compositionally biased region" description="Polar residues" evidence="5">
    <location>
        <begin position="1700"/>
        <end position="1714"/>
    </location>
</feature>
<feature type="glycosylation site" description="N-linked (GlcNAc...) asparagine" evidence="2">
    <location>
        <position position="354"/>
    </location>
</feature>
<feature type="glycosylation site" description="N-linked (GlcNAc...) asparagine" evidence="2">
    <location>
        <position position="579"/>
    </location>
</feature>
<feature type="glycosylation site" description="N-linked (GlcNAc...) asparagine" evidence="2">
    <location>
        <position position="635"/>
    </location>
</feature>
<feature type="glycosylation site" description="N-linked (GlcNAc...) asparagine" evidence="2">
    <location>
        <position position="1181"/>
    </location>
</feature>
<feature type="glycosylation site" description="N-linked (GlcNAc...) asparagine" evidence="2">
    <location>
        <position position="1304"/>
    </location>
</feature>
<feature type="glycosylation site" description="N-linked (GlcNAc...) asparagine" evidence="2">
    <location>
        <position position="1373"/>
    </location>
</feature>
<feature type="glycosylation site" description="N-linked (GlcNAc...) asparagine" evidence="2">
    <location>
        <position position="1506"/>
    </location>
</feature>
<feature type="glycosylation site" description="N-linked (GlcNAc...) asparagine" evidence="2">
    <location>
        <position position="1693"/>
    </location>
</feature>
<feature type="disulfide bond" evidence="3 4">
    <location>
        <begin position="180"/>
        <end position="224"/>
    </location>
</feature>
<feature type="disulfide bond" evidence="4">
    <location>
        <begin position="1450"/>
        <end position="1599"/>
    </location>
</feature>
<feature type="disulfide bond" evidence="4">
    <location>
        <begin position="1472"/>
        <end position="1635"/>
    </location>
</feature>